<comment type="function">
    <text evidence="8 9">HMG-CoA reductase; part of the gene cluster that mediates the biosynthesis of compactin, also known as mevastatin or ML-236B, and which acts as a potent competitive inhibitor of HMG-CoA reductase (PubMed:12172803, PubMed:12242508). Compactin biosynthesis is performed in two stages (PubMed:12172803). The first stage is catalyzed by the nonaketide synthase mlcA, which belongs to type I polyketide synthases and catalyzes the iterative nine-step formation of the polyketide (PubMed:12172803). This PKS stage is completed by the action of dehydrogenase mlcG, which catalyzes the NADPH-dependent reduction of the unsaturated tetra-, penta- and heptaketide intermediates that arise during the mlcA-mediated biosynthesis of the nonaketide chain and leads to dihydro-ML-236C carboxylate (PubMed:12172803). Covalently bound dihydro-ML-236C carboxylate is released from mlcA by the mlcF esterase (PubMed:12172803). Conversion of dihydro-ML-236C carboxylate into ML-236A carboxylate is subsequently performed with the participation of molecular oxygen and P450 monoogygenase mlcC (PubMed:12172803). Finally, mlcH performs the conversion of ML-236A carboxylate to ML-236B/compactin carboxylate through the addition of the side-chain diketide moiety produced by the diketide synthase mlcB (PubMed:12172803). HMG-CoA reductase mlcD may act as a down-regulator of compactin production and is involved in conferring resistance to ML-236B/compactin (PubMed:12242508).</text>
</comment>
<comment type="catalytic activity">
    <reaction>
        <text>(R)-mevalonate + 2 NADP(+) + CoA = (3S)-3-hydroxy-3-methylglutaryl-CoA + 2 NADPH + 2 H(+)</text>
        <dbReference type="Rhea" id="RHEA:15989"/>
        <dbReference type="ChEBI" id="CHEBI:15378"/>
        <dbReference type="ChEBI" id="CHEBI:36464"/>
        <dbReference type="ChEBI" id="CHEBI:43074"/>
        <dbReference type="ChEBI" id="CHEBI:57287"/>
        <dbReference type="ChEBI" id="CHEBI:57783"/>
        <dbReference type="ChEBI" id="CHEBI:58349"/>
        <dbReference type="EC" id="1.1.1.34"/>
    </reaction>
</comment>
<comment type="pathway">
    <text evidence="12">Polyketide biosynthesis.</text>
</comment>
<comment type="subcellular location">
    <subcellularLocation>
        <location evidence="1">Endoplasmic reticulum membrane</location>
        <topology evidence="2">Multi-pass membrane protein</topology>
    </subcellularLocation>
</comment>
<comment type="induction">
    <text evidence="8 10">Expression is induced at the beginning of the stationary phase, which is consistent with the timing of compactin production (PubMed:12172803). Expression is controlled by the ML-236B/compactin cluster transcription regulator mlcR (PubMed:12436257).</text>
</comment>
<comment type="biotechnology">
    <text evidence="7">Compactin (also known as mevastatin or ML-236B) and the intermediary metabolites Ml-236C and ML-236A are inhibitors of HMG-CoA reductase involved in cholesterogenesis (PubMed:1010803). Their hypocholesterolemic activity might be useful for lowering cholesterol levels in the blood and reduce artherosclerosis and coronary heart disease (PubMed:1010803).</text>
</comment>
<comment type="similarity">
    <text evidence="12">Belongs to the HMG-CoA reductase family.</text>
</comment>
<keyword id="KW-0256">Endoplasmic reticulum</keyword>
<keyword id="KW-0325">Glycoprotein</keyword>
<keyword id="KW-0472">Membrane</keyword>
<keyword id="KW-0521">NADP</keyword>
<keyword id="KW-0560">Oxidoreductase</keyword>
<keyword id="KW-0812">Transmembrane</keyword>
<keyword id="KW-1133">Transmembrane helix</keyword>
<evidence type="ECO:0000250" key="1">
    <source>
        <dbReference type="UniProtKB" id="P04035"/>
    </source>
</evidence>
<evidence type="ECO:0000255" key="2"/>
<evidence type="ECO:0000255" key="3">
    <source>
        <dbReference type="PROSITE-ProRule" id="PRU00199"/>
    </source>
</evidence>
<evidence type="ECO:0000255" key="4">
    <source>
        <dbReference type="PROSITE-ProRule" id="PRU00498"/>
    </source>
</evidence>
<evidence type="ECO:0000255" key="5">
    <source>
        <dbReference type="PROSITE-ProRule" id="PRU10003"/>
    </source>
</evidence>
<evidence type="ECO:0000256" key="6">
    <source>
        <dbReference type="SAM" id="MobiDB-lite"/>
    </source>
</evidence>
<evidence type="ECO:0000269" key="7">
    <source>
    </source>
</evidence>
<evidence type="ECO:0000269" key="8">
    <source>
    </source>
</evidence>
<evidence type="ECO:0000269" key="9">
    <source>
    </source>
</evidence>
<evidence type="ECO:0000269" key="10">
    <source>
    </source>
</evidence>
<evidence type="ECO:0000303" key="11">
    <source>
    </source>
</evidence>
<evidence type="ECO:0000305" key="12"/>
<evidence type="ECO:0000312" key="13">
    <source>
        <dbReference type="EMBL" id="BAC20567.1"/>
    </source>
</evidence>
<accession>Q8J0F4</accession>
<gene>
    <name evidence="11" type="primary">mlcD</name>
</gene>
<sequence>MVASLLPSRFRGRESMNQQHPLRSGNRALTSTLQFLSKTACLHPIHTVCTIAILASTTYVGLLKDSFFHGPANVDKAEWGSLVEGSRSLITGPQNGWKWQSFDGDADVLGDFNHQALMTLVFPGSYGVASQAASPFLAPLPVNLSVIDLPSTSSPLTAYSKDKVFAFSVEYSSAPELVAAVQEIPNNSADLKLQETQLIEMERQMWIMKAARAHTKRSLAQWVHDTWTESLDLIKSAQTLDVVVMVLGYISMHLTFVSLFLSMKKLGSKVWLATSVLLSSTFAFLLGLDVAIRLGVPMSMRLLSEGLPFLVVIVGFEKSITLTRAVLSYAVQHRKPQKIQSDQGSVTAIAESTINYAVRSAIREKGYNIVCHYVVEILLLVIGAVLGIQGGLQHFCVLAALILFFDCLLLFTFYTAILSIKLEVNRLKRHINMRYALEDEGLSQRTAESVATSNDAQDSARTYLFGNDMKGSSVPKFKFWMVVGFLIVNLVNIGSTLFQASSSGSLSSISSWTESLSGSAIKPPLEPFKVAGSGLDELLFQARGRGQSTMVTVLAPIKYELEYPSIHRGTSQLHEYGVGGKMVGSLLTSLEDPVLSKWVFVALALSVALNSYLFKAARLGIKDPNLPSHPVDPVELDQAESFNAAQNQTPQIQSSLQAPQTRVFTPTTTDSDSDASLVLIKASLKVTKRAEGKTATSELPVSRTQIELDNLLKQNTISELNDEDVVALSLRGKVPGYALEKSLKDCTRAVKVRRSIISRTPATAELTSMLEHSKLPYENYAWERVLGACCENVIGYMPVPVGVAGPIVIDGKSYFIPMATTEGVLVASASRGSKAINLGGGAVTVLTGDGMTRGPCVKFDVLERAGAAKIWLDSDVGQTVMKEAFNSTSRFARLQSMRTTIAGTHLYIRFKTTTGDAMGMNMISKGVEHALNVMATEAGFSDMNIITLSGNYCTDKKPSALNWIDGRGKGIVAEAIIPANVVRDVLKSDVDSMVQLNISKNLIGSAMAGSVGGFNAQAANLAAAIFIATGQDPAQVVESANCITLMNNLRGSLQISVSMPSIEVGTLGGGTILEPQGAMLDMLGVRGSHPTTPGENARQLARIIGSAVLAGELSLCAALAAGHLVKAHMAHNRSAPASSAPSRSVSPSGGTRTVPVPNNALRPSAAATDRARR</sequence>
<dbReference type="EC" id="1.1.1.34" evidence="12"/>
<dbReference type="EMBL" id="AB072893">
    <property type="protein sequence ID" value="BAC20567.1"/>
    <property type="molecule type" value="Genomic_DNA"/>
</dbReference>
<dbReference type="SMR" id="Q8J0F4"/>
<dbReference type="GlyCosmos" id="Q8J0F4">
    <property type="glycosylation" value="5 sites, No reported glycans"/>
</dbReference>
<dbReference type="GO" id="GO:0005789">
    <property type="term" value="C:endoplasmic reticulum membrane"/>
    <property type="evidence" value="ECO:0007669"/>
    <property type="project" value="UniProtKB-SubCell"/>
</dbReference>
<dbReference type="GO" id="GO:0005778">
    <property type="term" value="C:peroxisomal membrane"/>
    <property type="evidence" value="ECO:0007669"/>
    <property type="project" value="TreeGrafter"/>
</dbReference>
<dbReference type="GO" id="GO:0004420">
    <property type="term" value="F:hydroxymethylglutaryl-CoA reductase (NADPH) activity"/>
    <property type="evidence" value="ECO:0007669"/>
    <property type="project" value="UniProtKB-EC"/>
</dbReference>
<dbReference type="GO" id="GO:0015936">
    <property type="term" value="P:coenzyme A metabolic process"/>
    <property type="evidence" value="ECO:0007669"/>
    <property type="project" value="InterPro"/>
</dbReference>
<dbReference type="GO" id="GO:0006696">
    <property type="term" value="P:ergosterol biosynthetic process"/>
    <property type="evidence" value="ECO:0007669"/>
    <property type="project" value="TreeGrafter"/>
</dbReference>
<dbReference type="GO" id="GO:0008299">
    <property type="term" value="P:isoprenoid biosynthetic process"/>
    <property type="evidence" value="ECO:0007669"/>
    <property type="project" value="InterPro"/>
</dbReference>
<dbReference type="CDD" id="cd00643">
    <property type="entry name" value="HMG-CoA_reductase_classI"/>
    <property type="match status" value="1"/>
</dbReference>
<dbReference type="FunFam" id="1.10.3270.10:FF:000001">
    <property type="entry name" value="3-hydroxy-3-methylglutaryl coenzyme A reductase"/>
    <property type="match status" value="1"/>
</dbReference>
<dbReference type="FunFam" id="3.30.70.420:FF:000001">
    <property type="entry name" value="3-hydroxy-3-methylglutaryl coenzyme A reductase"/>
    <property type="match status" value="1"/>
</dbReference>
<dbReference type="FunFam" id="3.90.770.10:FF:000001">
    <property type="entry name" value="3-hydroxy-3-methylglutaryl coenzyme A reductase"/>
    <property type="match status" value="1"/>
</dbReference>
<dbReference type="Gene3D" id="3.90.770.10">
    <property type="entry name" value="3-hydroxy-3-methylglutaryl-coenzyme A Reductase, Chain A, domain 2"/>
    <property type="match status" value="1"/>
</dbReference>
<dbReference type="Gene3D" id="1.10.3270.10">
    <property type="entry name" value="HMGR, N-terminal domain"/>
    <property type="match status" value="1"/>
</dbReference>
<dbReference type="Gene3D" id="3.30.70.420">
    <property type="entry name" value="Hydroxymethylglutaryl-CoA reductase, class I/II, NAD/NADP-binding domain"/>
    <property type="match status" value="1"/>
</dbReference>
<dbReference type="InterPro" id="IPR025583">
    <property type="entry name" value="HMG-CoA_N_dom"/>
</dbReference>
<dbReference type="InterPro" id="IPR002202">
    <property type="entry name" value="HMG_CoA_Rdtase"/>
</dbReference>
<dbReference type="InterPro" id="IPR023074">
    <property type="entry name" value="HMG_CoA_Rdtase_cat_sf"/>
</dbReference>
<dbReference type="InterPro" id="IPR023076">
    <property type="entry name" value="HMG_CoA_Rdtase_CS"/>
</dbReference>
<dbReference type="InterPro" id="IPR004554">
    <property type="entry name" value="HMG_CoA_Rdtase_eu_arc"/>
</dbReference>
<dbReference type="InterPro" id="IPR023282">
    <property type="entry name" value="HMG_CoA_Rdtase_N"/>
</dbReference>
<dbReference type="InterPro" id="IPR009023">
    <property type="entry name" value="HMG_CoA_Rdtase_NAD(P)-bd_sf"/>
</dbReference>
<dbReference type="InterPro" id="IPR009029">
    <property type="entry name" value="HMG_CoA_Rdtase_sub-bd_dom_sf"/>
</dbReference>
<dbReference type="InterPro" id="IPR053958">
    <property type="entry name" value="HMGCR/SNAP/NPC1-like_SSD"/>
</dbReference>
<dbReference type="InterPro" id="IPR000731">
    <property type="entry name" value="SSD"/>
</dbReference>
<dbReference type="NCBIfam" id="TIGR00533">
    <property type="entry name" value="HMG_CoA_R_NADP"/>
    <property type="match status" value="1"/>
</dbReference>
<dbReference type="PANTHER" id="PTHR10572">
    <property type="entry name" value="3-HYDROXY-3-METHYLGLUTARYL-COENZYME A REDUCTASE"/>
    <property type="match status" value="1"/>
</dbReference>
<dbReference type="PANTHER" id="PTHR10572:SF24">
    <property type="entry name" value="3-HYDROXY-3-METHYLGLUTARYL-COENZYME A REDUCTASE"/>
    <property type="match status" value="1"/>
</dbReference>
<dbReference type="Pfam" id="PF00368">
    <property type="entry name" value="HMG-CoA_red"/>
    <property type="match status" value="1"/>
</dbReference>
<dbReference type="Pfam" id="PF13323">
    <property type="entry name" value="HPIH"/>
    <property type="match status" value="1"/>
</dbReference>
<dbReference type="Pfam" id="PF12349">
    <property type="entry name" value="Sterol-sensing"/>
    <property type="match status" value="1"/>
</dbReference>
<dbReference type="PRINTS" id="PR00071">
    <property type="entry name" value="HMGCOARDTASE"/>
</dbReference>
<dbReference type="SUPFAM" id="SSF55035">
    <property type="entry name" value="NAD-binding domain of HMG-CoA reductase"/>
    <property type="match status" value="1"/>
</dbReference>
<dbReference type="SUPFAM" id="SSF56542">
    <property type="entry name" value="Substrate-binding domain of HMG-CoA reductase"/>
    <property type="match status" value="1"/>
</dbReference>
<dbReference type="PROSITE" id="PS00066">
    <property type="entry name" value="HMG_COA_REDUCTASE_1"/>
    <property type="match status" value="1"/>
</dbReference>
<dbReference type="PROSITE" id="PS00318">
    <property type="entry name" value="HMG_COA_REDUCTASE_2"/>
    <property type="match status" value="1"/>
</dbReference>
<dbReference type="PROSITE" id="PS01192">
    <property type="entry name" value="HMG_COA_REDUCTASE_3"/>
    <property type="match status" value="1"/>
</dbReference>
<dbReference type="PROSITE" id="PS50065">
    <property type="entry name" value="HMG_COA_REDUCTASE_4"/>
    <property type="match status" value="1"/>
</dbReference>
<dbReference type="PROSITE" id="PS50156">
    <property type="entry name" value="SSD"/>
    <property type="match status" value="1"/>
</dbReference>
<protein>
    <recommendedName>
        <fullName evidence="12">3-hydroxy-3-methylglutaryl coenzyme A reductase mlcD</fullName>
        <shortName evidence="11">HMG-CoA reductase</shortName>
        <ecNumber evidence="12">1.1.1.34</ecNumber>
    </recommendedName>
    <alternativeName>
        <fullName evidence="11">Compactin biosynthesis protein G</fullName>
    </alternativeName>
</protein>
<reference key="1">
    <citation type="journal article" date="2002" name="Mol. Genet. Genomics">
        <title>Molecular cloning and characterization of an ML-236B (compactin) biosynthetic gene cluster in Penicillium citrinum.</title>
        <authorList>
            <person name="Abe Y."/>
            <person name="Suzuki T."/>
            <person name="Ono C."/>
            <person name="Iwamoto K."/>
            <person name="Hosobuchi M."/>
            <person name="Yoshikawa H."/>
        </authorList>
    </citation>
    <scope>NUCLEOTIDE SEQUENCE [GENOMIC DNA]</scope>
    <scope>INDUCTION</scope>
    <scope>FUNCTION</scope>
</reference>
<reference key="2">
    <citation type="journal article" date="2002" name="Mol. Genet. Genomics">
        <title>Effect of increased dosage of the ML-236B (compactin) biosynthetic gene cluster on ML-236B production in Penicillium citrinum.</title>
        <authorList>
            <person name="Abe Y."/>
            <person name="Suzuki T."/>
            <person name="Mizuno T."/>
            <person name="Ono C."/>
            <person name="Iwamoto K."/>
            <person name="Hosobuchi M."/>
            <person name="Yoshikawa H."/>
        </authorList>
    </citation>
    <scope>FUNCTION</scope>
</reference>
<reference key="3">
    <citation type="journal article" date="1976" name="J. Antibiot.">
        <title>ML-236A, ML-236B, and ML-236C, new inhibitors of cholesterogenesis produced by Penicillium citrinium.</title>
        <authorList>
            <person name="Endo A."/>
            <person name="Kuroda M."/>
            <person name="Tsujita Y."/>
        </authorList>
    </citation>
    <scope>BIOTECHNOLOGY</scope>
</reference>
<reference key="4">
    <citation type="journal article" date="2002" name="Mol. Genet. Genomics">
        <title>Functional analysis of mlcR, a regulatory gene for ML-236B (compactin) biosynthesis in Penicillium citrinum.</title>
        <authorList>
            <person name="Abe Y."/>
            <person name="Ono C."/>
            <person name="Hosobuchi M."/>
            <person name="Yoshikawa H."/>
        </authorList>
    </citation>
    <scope>INDUCTION</scope>
</reference>
<proteinExistence type="evidence at protein level"/>
<feature type="chain" id="PRO_0000436290" description="3-hydroxy-3-methylglutaryl coenzyme A reductase mlcD">
    <location>
        <begin position="1"/>
        <end position="1173"/>
    </location>
</feature>
<feature type="transmembrane region" description="Helical" evidence="2">
    <location>
        <begin position="242"/>
        <end position="262"/>
    </location>
</feature>
<feature type="transmembrane region" description="Helical" evidence="2">
    <location>
        <begin position="272"/>
        <end position="292"/>
    </location>
</feature>
<feature type="transmembrane region" description="Helical" evidence="2">
    <location>
        <begin position="302"/>
        <end position="322"/>
    </location>
</feature>
<feature type="transmembrane region" description="Helical" evidence="2">
    <location>
        <begin position="368"/>
        <end position="388"/>
    </location>
</feature>
<feature type="transmembrane region" description="Helical" evidence="2">
    <location>
        <begin position="397"/>
        <end position="417"/>
    </location>
</feature>
<feature type="transmembrane region" description="Helical" evidence="2">
    <location>
        <begin position="479"/>
        <end position="499"/>
    </location>
</feature>
<feature type="transmembrane region" description="Helical" evidence="2">
    <location>
        <begin position="594"/>
        <end position="614"/>
    </location>
</feature>
<feature type="domain" description="SSD" evidence="3">
    <location>
        <begin position="241"/>
        <end position="420"/>
    </location>
</feature>
<feature type="region of interest" description="Linker" evidence="1">
    <location>
        <begin position="498"/>
        <end position="673"/>
    </location>
</feature>
<feature type="region of interest" description="Disordered" evidence="6">
    <location>
        <begin position="647"/>
        <end position="669"/>
    </location>
</feature>
<feature type="region of interest" description="Catalytic" evidence="1">
    <location>
        <begin position="674"/>
        <end position="1133"/>
    </location>
</feature>
<feature type="region of interest" description="Disordered" evidence="6">
    <location>
        <begin position="1132"/>
        <end position="1173"/>
    </location>
</feature>
<feature type="compositionally biased region" description="Polar residues" evidence="6">
    <location>
        <begin position="647"/>
        <end position="666"/>
    </location>
</feature>
<feature type="compositionally biased region" description="Low complexity" evidence="6">
    <location>
        <begin position="1133"/>
        <end position="1148"/>
    </location>
</feature>
<feature type="active site" description="Charge relay system" evidence="1">
    <location>
        <position position="822"/>
    </location>
</feature>
<feature type="active site" description="Charge relay system" evidence="1">
    <location>
        <position position="956"/>
    </location>
</feature>
<feature type="active site" description="Charge relay system" evidence="1">
    <location>
        <position position="1032"/>
    </location>
</feature>
<feature type="active site" description="Proton donor" evidence="5">
    <location>
        <position position="1128"/>
    </location>
</feature>
<feature type="glycosylation site" description="N-linked (GlcNAc...) asparagine" evidence="4">
    <location>
        <position position="143"/>
    </location>
</feature>
<feature type="glycosylation site" description="N-linked (GlcNAc...) asparagine" evidence="4">
    <location>
        <position position="186"/>
    </location>
</feature>
<feature type="glycosylation site" description="N-linked (GlcNAc...) asparagine" evidence="4">
    <location>
        <position position="886"/>
    </location>
</feature>
<feature type="glycosylation site" description="N-linked (GlcNAc...) asparagine" evidence="4">
    <location>
        <position position="997"/>
    </location>
</feature>
<feature type="glycosylation site" description="N-linked (GlcNAc...) asparagine" evidence="4">
    <location>
        <position position="1132"/>
    </location>
</feature>
<name>MLCD_PENCI</name>
<organism evidence="13">
    <name type="scientific">Penicillium citrinum</name>
    <dbReference type="NCBI Taxonomy" id="5077"/>
    <lineage>
        <taxon>Eukaryota</taxon>
        <taxon>Fungi</taxon>
        <taxon>Dikarya</taxon>
        <taxon>Ascomycota</taxon>
        <taxon>Pezizomycotina</taxon>
        <taxon>Eurotiomycetes</taxon>
        <taxon>Eurotiomycetidae</taxon>
        <taxon>Eurotiales</taxon>
        <taxon>Aspergillaceae</taxon>
        <taxon>Penicillium</taxon>
    </lineage>
</organism>